<dbReference type="EMBL" id="AC243972">
    <property type="status" value="NOT_ANNOTATED_CDS"/>
    <property type="molecule type" value="Genomic_DNA"/>
</dbReference>
<dbReference type="SMR" id="A0A0B4J234"/>
<dbReference type="FunCoup" id="A0A0B4J234">
    <property type="interactions" value="143"/>
</dbReference>
<dbReference type="IMGT_GENE-DB" id="TRAV2"/>
<dbReference type="GlyCosmos" id="A0A0B4J234">
    <property type="glycosylation" value="2 sites, No reported glycans"/>
</dbReference>
<dbReference type="GlyGen" id="A0A0B4J234">
    <property type="glycosylation" value="2 sites"/>
</dbReference>
<dbReference type="BioMuta" id="TRAV2"/>
<dbReference type="Ensembl" id="ENST00000390424.2">
    <property type="protein sequence ID" value="ENSP00000438195.1"/>
    <property type="gene ID" value="ENSG00000211776.2"/>
</dbReference>
<dbReference type="AGR" id="HGNC:12116"/>
<dbReference type="GeneCards" id="TRAV2"/>
<dbReference type="HGNC" id="HGNC:12116">
    <property type="gene designation" value="TRAV2"/>
</dbReference>
<dbReference type="HPA" id="ENSG00000211776">
    <property type="expression patterns" value="Tissue enriched (lymphoid)"/>
</dbReference>
<dbReference type="neXtProt" id="NX_A0A0B4J234"/>
<dbReference type="VEuPathDB" id="HostDB:ENSG00000211776"/>
<dbReference type="GeneTree" id="ENSGT00740000116858"/>
<dbReference type="HOGENOM" id="CLU_2060774_0_0_1"/>
<dbReference type="InParanoid" id="A0A0B4J234"/>
<dbReference type="OMA" id="VVEIFCN"/>
<dbReference type="OrthoDB" id="9631130at2759"/>
<dbReference type="PAN-GO" id="A0A0B4J234">
    <property type="GO annotations" value="3 GO annotations based on evolutionary models"/>
</dbReference>
<dbReference type="PhylomeDB" id="A0A0B4J234"/>
<dbReference type="SignaLink" id="A0A0B4J234"/>
<dbReference type="ChiTaRS" id="TRAV2">
    <property type="organism name" value="human"/>
</dbReference>
<dbReference type="Pharos" id="A0A0B4J234">
    <property type="development level" value="Tdark"/>
</dbReference>
<dbReference type="PRO" id="PR:A0A0B4J234"/>
<dbReference type="Proteomes" id="UP000005640">
    <property type="component" value="Chromosome 14"/>
</dbReference>
<dbReference type="RNAct" id="A0A0B4J234">
    <property type="molecule type" value="protein"/>
</dbReference>
<dbReference type="Bgee" id="ENSG00000211776">
    <property type="expression patterns" value="Expressed in lymph node and 74 other cell types or tissues"/>
</dbReference>
<dbReference type="GO" id="GO:0019814">
    <property type="term" value="C:immunoglobulin complex"/>
    <property type="evidence" value="ECO:0000318"/>
    <property type="project" value="GO_Central"/>
</dbReference>
<dbReference type="GO" id="GO:0042101">
    <property type="term" value="C:T cell receptor complex"/>
    <property type="evidence" value="ECO:0007669"/>
    <property type="project" value="UniProtKB-KW"/>
</dbReference>
<dbReference type="GO" id="GO:0002250">
    <property type="term" value="P:adaptive immune response"/>
    <property type="evidence" value="ECO:0007669"/>
    <property type="project" value="UniProtKB-KW"/>
</dbReference>
<dbReference type="GO" id="GO:0006955">
    <property type="term" value="P:immune response"/>
    <property type="evidence" value="ECO:0000318"/>
    <property type="project" value="GO_Central"/>
</dbReference>
<dbReference type="Gene3D" id="2.60.40.10">
    <property type="entry name" value="Immunoglobulins"/>
    <property type="match status" value="1"/>
</dbReference>
<dbReference type="InterPro" id="IPR007110">
    <property type="entry name" value="Ig-like_dom"/>
</dbReference>
<dbReference type="InterPro" id="IPR036179">
    <property type="entry name" value="Ig-like_dom_sf"/>
</dbReference>
<dbReference type="InterPro" id="IPR013783">
    <property type="entry name" value="Ig-like_fold"/>
</dbReference>
<dbReference type="InterPro" id="IPR013106">
    <property type="entry name" value="Ig_V-set"/>
</dbReference>
<dbReference type="InterPro" id="IPR051287">
    <property type="entry name" value="TCR_variable_region"/>
</dbReference>
<dbReference type="PANTHER" id="PTHR19367:SF18">
    <property type="entry name" value="T CELL RECEPTOR ALPHA VARIABLE 16"/>
    <property type="match status" value="1"/>
</dbReference>
<dbReference type="PANTHER" id="PTHR19367">
    <property type="entry name" value="T-CELL RECEPTOR ALPHA CHAIN V REGION"/>
    <property type="match status" value="1"/>
</dbReference>
<dbReference type="Pfam" id="PF07686">
    <property type="entry name" value="V-set"/>
    <property type="match status" value="1"/>
</dbReference>
<dbReference type="SUPFAM" id="SSF48726">
    <property type="entry name" value="Immunoglobulin"/>
    <property type="match status" value="1"/>
</dbReference>
<dbReference type="PROSITE" id="PS50835">
    <property type="entry name" value="IG_LIKE"/>
    <property type="match status" value="1"/>
</dbReference>
<name>TVA2_HUMAN</name>
<proteinExistence type="inferred from homology"/>
<gene>
    <name evidence="8" type="primary">TRAV2</name>
</gene>
<protein>
    <recommendedName>
        <fullName evidence="8">T cell receptor alpha variable 2</fullName>
    </recommendedName>
</protein>
<reference key="1">
    <citation type="journal article" date="2003" name="Nature">
        <title>The DNA sequence and analysis of human chromosome 14.</title>
        <authorList>
            <person name="Heilig R."/>
            <person name="Eckenberg R."/>
            <person name="Petit J.-L."/>
            <person name="Fonknechten N."/>
            <person name="Da Silva C."/>
            <person name="Cattolico L."/>
            <person name="Levy M."/>
            <person name="Barbe V."/>
            <person name="De Berardinis V."/>
            <person name="Ureta-Vidal A."/>
            <person name="Pelletier E."/>
            <person name="Vico V."/>
            <person name="Anthouard V."/>
            <person name="Rowen L."/>
            <person name="Madan A."/>
            <person name="Qin S."/>
            <person name="Sun H."/>
            <person name="Du H."/>
            <person name="Pepin K."/>
            <person name="Artiguenave F."/>
            <person name="Robert C."/>
            <person name="Cruaud C."/>
            <person name="Bruels T."/>
            <person name="Jaillon O."/>
            <person name="Friedlander L."/>
            <person name="Samson G."/>
            <person name="Brottier P."/>
            <person name="Cure S."/>
            <person name="Segurens B."/>
            <person name="Aniere F."/>
            <person name="Samain S."/>
            <person name="Crespeau H."/>
            <person name="Abbasi N."/>
            <person name="Aiach N."/>
            <person name="Boscus D."/>
            <person name="Dickhoff R."/>
            <person name="Dors M."/>
            <person name="Dubois I."/>
            <person name="Friedman C."/>
            <person name="Gouyvenoux M."/>
            <person name="James R."/>
            <person name="Madan A."/>
            <person name="Mairey-Estrada B."/>
            <person name="Mangenot S."/>
            <person name="Martins N."/>
            <person name="Menard M."/>
            <person name="Oztas S."/>
            <person name="Ratcliffe A."/>
            <person name="Shaffer T."/>
            <person name="Trask B."/>
            <person name="Vacherie B."/>
            <person name="Bellemere C."/>
            <person name="Belser C."/>
            <person name="Besnard-Gonnet M."/>
            <person name="Bartol-Mavel D."/>
            <person name="Boutard M."/>
            <person name="Briez-Silla S."/>
            <person name="Combette S."/>
            <person name="Dufosse-Laurent V."/>
            <person name="Ferron C."/>
            <person name="Lechaplais C."/>
            <person name="Louesse C."/>
            <person name="Muselet D."/>
            <person name="Magdelenat G."/>
            <person name="Pateau E."/>
            <person name="Petit E."/>
            <person name="Sirvain-Trukniewicz P."/>
            <person name="Trybou A."/>
            <person name="Vega-Czarny N."/>
            <person name="Bataille E."/>
            <person name="Bluet E."/>
            <person name="Bordelais I."/>
            <person name="Dubois M."/>
            <person name="Dumont C."/>
            <person name="Guerin T."/>
            <person name="Haffray S."/>
            <person name="Hammadi R."/>
            <person name="Muanga J."/>
            <person name="Pellouin V."/>
            <person name="Robert D."/>
            <person name="Wunderle E."/>
            <person name="Gauguet G."/>
            <person name="Roy A."/>
            <person name="Sainte-Marthe L."/>
            <person name="Verdier J."/>
            <person name="Verdier-Discala C."/>
            <person name="Hillier L.W."/>
            <person name="Fulton L."/>
            <person name="McPherson J."/>
            <person name="Matsuda F."/>
            <person name="Wilson R."/>
            <person name="Scarpelli C."/>
            <person name="Gyapay G."/>
            <person name="Wincker P."/>
            <person name="Saurin W."/>
            <person name="Quetier F."/>
            <person name="Waterston R."/>
            <person name="Hood L."/>
            <person name="Weissenbach J."/>
        </authorList>
    </citation>
    <scope>NUCLEOTIDE SEQUENCE [LARGE SCALE GENOMIC DNA] (IMGT ALLELE TRAV2*01)</scope>
</reference>
<reference key="2">
    <citation type="book" date="2001" name="The T Cell Receptor FactsBook.">
        <title>The T Cell Receptor FactsBook.</title>
        <editorList>
            <person name="Lefranc M.P."/>
            <person name="Lefranc G."/>
        </editorList>
        <authorList>
            <person name="Lefranc M.P."/>
            <person name="Lefranc G."/>
        </authorList>
    </citation>
    <scope>NOMENCLATURE</scope>
</reference>
<reference key="3">
    <citation type="journal article" date="2004" name="Nat. Rev. Immunol.">
        <title>The many important facets of T-cell repertoire diversity.</title>
        <authorList>
            <person name="Nikolich-Zugich J."/>
            <person name="Slifka M.K."/>
            <person name="Messaoudi I."/>
        </authorList>
    </citation>
    <scope>REVIEW ON T CELL REPERTOIRE DIVERSITY</scope>
</reference>
<reference key="4">
    <citation type="journal article" date="2010" name="Cold Spring Harb. Perspect. Biol.">
        <title>Structural biology of the T-cell receptor: insights into receptor assembly, ligand recognition, and initiation of signaling.</title>
        <authorList>
            <person name="Wucherpfennig K.W."/>
            <person name="Gagnon E."/>
            <person name="Call M.J."/>
            <person name="Huseby E.S."/>
            <person name="Call M.E."/>
        </authorList>
    </citation>
    <scope>REVIEW ON T CELL RECEPTOR-CD3 COMPLEX ASSEMBLY</scope>
    <scope>SUBCELLULAR LOCATION</scope>
</reference>
<reference key="5">
    <citation type="journal article" date="2013" name="Nat. Rev. Immunol.">
        <title>T cell receptor signalling networks: branched, diversified and bounded.</title>
        <authorList>
            <person name="Brownlie R.J."/>
            <person name="Zamoyska R."/>
        </authorList>
    </citation>
    <scope>REVIEW ON T CELL RECEPTOR SIGNALING</scope>
</reference>
<reference key="6">
    <citation type="journal article" date="2014" name="Front. Immunol.">
        <title>Immunoglobulin and T Cell Receptor Genes: IMGT((R)) and the Birth and Rise of Immunoinformatics.</title>
        <authorList>
            <person name="Lefranc M.P."/>
        </authorList>
    </citation>
    <scope>NOMENCLATURE</scope>
</reference>
<reference key="7">
    <citation type="journal article" date="2015" name="Annu. Rev. Immunol.">
        <title>T cell antigen receptor recognition of antigen-presenting molecules.</title>
        <authorList>
            <person name="Rossjohn J."/>
            <person name="Gras S."/>
            <person name="Miles J.J."/>
            <person name="Turner S.J."/>
            <person name="Godfrey D.I."/>
            <person name="McCluskey J."/>
        </authorList>
    </citation>
    <scope>REVIEW ON FUNCTION</scope>
</reference>
<evidence type="ECO:0000255" key="1"/>
<evidence type="ECO:0000255" key="2">
    <source>
        <dbReference type="PROSITE-ProRule" id="PRU00114"/>
    </source>
</evidence>
<evidence type="ECO:0000303" key="3">
    <source>
    </source>
</evidence>
<evidence type="ECO:0000303" key="4">
    <source>
    </source>
</evidence>
<evidence type="ECO:0000303" key="5">
    <source>
    </source>
</evidence>
<evidence type="ECO:0000303" key="6">
    <source>
    </source>
</evidence>
<evidence type="ECO:0000303" key="7">
    <source>
    </source>
</evidence>
<evidence type="ECO:0000303" key="8">
    <source ref="2"/>
</evidence>
<evidence type="ECO:0000305" key="9"/>
<feature type="signal peptide" evidence="1">
    <location>
        <begin position="1"/>
        <end position="25"/>
    </location>
</feature>
<feature type="chain" id="PRO_5002092607" description="T cell receptor alpha variable 2" evidence="1">
    <location>
        <begin position="26"/>
        <end position="112"/>
    </location>
</feature>
<feature type="domain" description="Ig-like" evidence="2">
    <location>
        <begin position="26"/>
        <end position="112" status="greater than"/>
    </location>
</feature>
<feature type="glycosylation site" description="N-linked (GlcNAc...) asparagine" evidence="1">
    <location>
        <position position="48"/>
    </location>
</feature>
<feature type="glycosylation site" description="N-linked (GlcNAc...) asparagine" evidence="1">
    <location>
        <position position="84"/>
    </location>
</feature>
<feature type="disulfide bond" evidence="2">
    <location>
        <begin position="47"/>
        <end position="109"/>
    </location>
</feature>
<feature type="non-terminal residue">
    <location>
        <position position="112"/>
    </location>
</feature>
<comment type="function">
    <text evidence="3 5 6 7">V region of the variable domain of T cell receptor (TR) alpha chain that participates in the antigen recognition (PubMed:24600447). Alpha-beta T cell receptors are antigen specific receptors which are essential to the immune response and are present on the cell surface of T lymphocytes. Recognize peptide-major histocompatibility (MH) (pMH) complexes that are displayed by antigen presenting cells (APC), a prerequisite for efficient T cell adaptive immunity against pathogens (PubMed:25493333). Binding of alpha-beta TR to pMH complex initiates TR-CD3 clustering on the cell surface and intracellular activation of LCK that phosphorylates the ITAM motifs of CD3G, CD3D, CD3E and CD247 enabling the recruitment of ZAP70. In turn ZAP70 phosphorylates LAT, which recruits numerous signaling molecules to form the LAT signalosome. The LAT signalosome propagates signal branching to three major signaling pathways, the calcium, the mitogen-activated protein kinase (MAPK) kinase and the nuclear factor NF-kappa-B (NF-kB) pathways, leading to the mobilization of transcription factors that are critical for gene expression and essential for T cell growth and differentiation (PubMed:23524462). The T cell repertoire is generated in the thymus, by V-(D)-J rearrangement. This repertoire is then shaped by intrathymic selection events to generate a peripheral T cell pool of self-MH restricted, non-autoaggressive T cells. Post-thymic interaction of alpha-beta TR with the pMH complexes shapes TR structural and functional avidity (PubMed:15040585).</text>
</comment>
<comment type="subunit">
    <text evidence="4">Alpha-beta TR is a heterodimer composed of an alpha and beta chain; disulfide-linked. The alpha-beta TR is associated with the transmembrane signaling CD3 coreceptor proteins to form the TR-CD3 (TcR or TCR). The assembly of alpha-beta TR heterodimers with CD3 occurs in the endoplasmic reticulum where a single alpha-beta TR heterodimer associates with one CD3D-CD3E heterodimer, one CD3G-CD3E heterodimer and one CD247 homodimer forming a stable octameric structure. CD3D-CD3E and CD3G-CD3E heterodimers preferentially associate with TR alpha and TR beta chains, respectively. The association of the CD247 homodimer is the last step of TcR assembly in the endoplasmic reticulum and is required for transport to the cell surface.</text>
</comment>
<comment type="subcellular location">
    <subcellularLocation>
        <location evidence="4">Cell membrane</location>
    </subcellularLocation>
</comment>
<comment type="polymorphism">
    <text evidence="9">There are several alleles. The sequence shown is that of IMGT allele TRAV2*01.</text>
</comment>
<keyword id="KW-1064">Adaptive immunity</keyword>
<keyword id="KW-1003">Cell membrane</keyword>
<keyword id="KW-1015">Disulfide bond</keyword>
<keyword id="KW-0325">Glycoprotein</keyword>
<keyword id="KW-0391">Immunity</keyword>
<keyword id="KW-0393">Immunoglobulin domain</keyword>
<keyword id="KW-0472">Membrane</keyword>
<keyword id="KW-0675">Receptor</keyword>
<keyword id="KW-1185">Reference proteome</keyword>
<keyword id="KW-0732">Signal</keyword>
<keyword id="KW-1279">T cell receptor</keyword>
<accession>A0A0B4J234</accession>
<organism>
    <name type="scientific">Homo sapiens</name>
    <name type="common">Human</name>
    <dbReference type="NCBI Taxonomy" id="9606"/>
    <lineage>
        <taxon>Eukaryota</taxon>
        <taxon>Metazoa</taxon>
        <taxon>Chordata</taxon>
        <taxon>Craniata</taxon>
        <taxon>Vertebrata</taxon>
        <taxon>Euteleostomi</taxon>
        <taxon>Mammalia</taxon>
        <taxon>Eutheria</taxon>
        <taxon>Euarchontoglires</taxon>
        <taxon>Primates</taxon>
        <taxon>Haplorrhini</taxon>
        <taxon>Catarrhini</taxon>
        <taxon>Hominidae</taxon>
        <taxon>Homo</taxon>
    </lineage>
</organism>
<sequence>MALQSTLGAVWLGLLLNSLWKVAESKDQVFQPSTVASSEGAVVEIFCNHSVSNAYNFFWYLHFPGCAPRLLVKGSKPSQQGRYNMTYERFSSSLLILQVREADAAVYYCAVE</sequence>